<reference key="1">
    <citation type="journal article" date="2003" name="Nucleic Acids Res.">
        <title>What's in the genome of a filamentous fungus? Analysis of the Neurospora genome sequence.</title>
        <authorList>
            <person name="Mannhaupt G."/>
            <person name="Montrone C."/>
            <person name="Haase D."/>
            <person name="Mewes H.-W."/>
            <person name="Aign V."/>
            <person name="Hoheisel J.D."/>
            <person name="Fartmann B."/>
            <person name="Nyakatura G."/>
            <person name="Kempken F."/>
            <person name="Maier J."/>
            <person name="Schulte U."/>
        </authorList>
    </citation>
    <scope>NUCLEOTIDE SEQUENCE [LARGE SCALE GENOMIC DNA]</scope>
    <source>
        <strain>ATCC 24698 / 74-OR23-1A / CBS 708.71 / DSM 1257 / FGSC 987</strain>
    </source>
</reference>
<reference key="2">
    <citation type="journal article" date="2003" name="Nature">
        <title>The genome sequence of the filamentous fungus Neurospora crassa.</title>
        <authorList>
            <person name="Galagan J.E."/>
            <person name="Calvo S.E."/>
            <person name="Borkovich K.A."/>
            <person name="Selker E.U."/>
            <person name="Read N.D."/>
            <person name="Jaffe D.B."/>
            <person name="FitzHugh W."/>
            <person name="Ma L.-J."/>
            <person name="Smirnov S."/>
            <person name="Purcell S."/>
            <person name="Rehman B."/>
            <person name="Elkins T."/>
            <person name="Engels R."/>
            <person name="Wang S."/>
            <person name="Nielsen C.B."/>
            <person name="Butler J."/>
            <person name="Endrizzi M."/>
            <person name="Qui D."/>
            <person name="Ianakiev P."/>
            <person name="Bell-Pedersen D."/>
            <person name="Nelson M.A."/>
            <person name="Werner-Washburne M."/>
            <person name="Selitrennikoff C.P."/>
            <person name="Kinsey J.A."/>
            <person name="Braun E.L."/>
            <person name="Zelter A."/>
            <person name="Schulte U."/>
            <person name="Kothe G.O."/>
            <person name="Jedd G."/>
            <person name="Mewes H.-W."/>
            <person name="Staben C."/>
            <person name="Marcotte E."/>
            <person name="Greenberg D."/>
            <person name="Roy A."/>
            <person name="Foley K."/>
            <person name="Naylor J."/>
            <person name="Stange-Thomann N."/>
            <person name="Barrett R."/>
            <person name="Gnerre S."/>
            <person name="Kamal M."/>
            <person name="Kamvysselis M."/>
            <person name="Mauceli E.W."/>
            <person name="Bielke C."/>
            <person name="Rudd S."/>
            <person name="Frishman D."/>
            <person name="Krystofova S."/>
            <person name="Rasmussen C."/>
            <person name="Metzenberg R.L."/>
            <person name="Perkins D.D."/>
            <person name="Kroken S."/>
            <person name="Cogoni C."/>
            <person name="Macino G."/>
            <person name="Catcheside D.E.A."/>
            <person name="Li W."/>
            <person name="Pratt R.J."/>
            <person name="Osmani S.A."/>
            <person name="DeSouza C.P.C."/>
            <person name="Glass N.L."/>
            <person name="Orbach M.J."/>
            <person name="Berglund J.A."/>
            <person name="Voelker R."/>
            <person name="Yarden O."/>
            <person name="Plamann M."/>
            <person name="Seiler S."/>
            <person name="Dunlap J.C."/>
            <person name="Radford A."/>
            <person name="Aramayo R."/>
            <person name="Natvig D.O."/>
            <person name="Alex L.A."/>
            <person name="Mannhaupt G."/>
            <person name="Ebbole D.J."/>
            <person name="Freitag M."/>
            <person name="Paulsen I."/>
            <person name="Sachs M.S."/>
            <person name="Lander E.S."/>
            <person name="Nusbaum C."/>
            <person name="Birren B.W."/>
        </authorList>
    </citation>
    <scope>NUCLEOTIDE SEQUENCE [LARGE SCALE GENOMIC DNA]</scope>
    <source>
        <strain>ATCC 24698 / 74-OR23-1A / CBS 708.71 / DSM 1257 / FGSC 987</strain>
    </source>
</reference>
<dbReference type="EMBL" id="BX842596">
    <property type="protein sequence ID" value="CAE75713.1"/>
    <property type="molecule type" value="Genomic_DNA"/>
</dbReference>
<dbReference type="EMBL" id="CM002237">
    <property type="protein sequence ID" value="EAA33984.1"/>
    <property type="molecule type" value="Genomic_DNA"/>
</dbReference>
<dbReference type="RefSeq" id="XP_963220.1">
    <property type="nucleotide sequence ID" value="XM_958127.2"/>
</dbReference>
<dbReference type="SMR" id="Q7SC15"/>
<dbReference type="FunCoup" id="Q7SC15">
    <property type="interactions" value="323"/>
</dbReference>
<dbReference type="STRING" id="367110.Q7SC15"/>
<dbReference type="PaxDb" id="5141-EFNCRP00000009309"/>
<dbReference type="EnsemblFungi" id="EAA33984">
    <property type="protein sequence ID" value="EAA33984"/>
    <property type="gene ID" value="NCU09465"/>
</dbReference>
<dbReference type="GeneID" id="3879368"/>
<dbReference type="KEGG" id="ncr:NCU09465"/>
<dbReference type="VEuPathDB" id="FungiDB:NCU09465"/>
<dbReference type="HOGENOM" id="CLU_155991_4_1_1"/>
<dbReference type="InParanoid" id="Q7SC15"/>
<dbReference type="OMA" id="IYDPDMF"/>
<dbReference type="OrthoDB" id="66964at2759"/>
<dbReference type="UniPathway" id="UPA00559"/>
<dbReference type="Proteomes" id="UP000001805">
    <property type="component" value="Chromosome 6, Linkage Group II"/>
</dbReference>
<dbReference type="GO" id="GO:0005737">
    <property type="term" value="C:cytoplasm"/>
    <property type="evidence" value="ECO:0007669"/>
    <property type="project" value="UniProtKB-SubCell"/>
</dbReference>
<dbReference type="GO" id="GO:0005634">
    <property type="term" value="C:nucleus"/>
    <property type="evidence" value="ECO:0007669"/>
    <property type="project" value="UniProtKB-SubCell"/>
</dbReference>
<dbReference type="GO" id="GO:0008198">
    <property type="term" value="F:ferrous iron binding"/>
    <property type="evidence" value="ECO:0000250"/>
    <property type="project" value="UniProtKB"/>
</dbReference>
<dbReference type="GO" id="GO:0034986">
    <property type="term" value="F:iron chaperone activity"/>
    <property type="evidence" value="ECO:0000250"/>
    <property type="project" value="UniProtKB"/>
</dbReference>
<dbReference type="GO" id="GO:0016491">
    <property type="term" value="F:oxidoreductase activity"/>
    <property type="evidence" value="ECO:0007669"/>
    <property type="project" value="UniProtKB-KW"/>
</dbReference>
<dbReference type="GO" id="GO:0017183">
    <property type="term" value="P:protein histidyl modification to diphthamide"/>
    <property type="evidence" value="ECO:0000250"/>
    <property type="project" value="UniProtKB"/>
</dbReference>
<dbReference type="GO" id="GO:0002926">
    <property type="term" value="P:tRNA wobble base 5-methoxycarbonylmethyl-2-thiouridinylation"/>
    <property type="evidence" value="ECO:0000250"/>
    <property type="project" value="UniProtKB"/>
</dbReference>
<dbReference type="FunFam" id="3.10.660.10:FF:000001">
    <property type="entry name" value="Diphthamide biosynthesis 3"/>
    <property type="match status" value="1"/>
</dbReference>
<dbReference type="Gene3D" id="3.10.660.10">
    <property type="entry name" value="DPH Zinc finger"/>
    <property type="match status" value="1"/>
</dbReference>
<dbReference type="InterPro" id="IPR044248">
    <property type="entry name" value="DPH3/4-like"/>
</dbReference>
<dbReference type="InterPro" id="IPR007872">
    <property type="entry name" value="DPH_MB_dom"/>
</dbReference>
<dbReference type="InterPro" id="IPR036671">
    <property type="entry name" value="DPH_MB_sf"/>
</dbReference>
<dbReference type="PANTHER" id="PTHR21454:SF31">
    <property type="entry name" value="DIPHTHAMIDE BIOSYNTHESIS PROTEIN 3"/>
    <property type="match status" value="1"/>
</dbReference>
<dbReference type="PANTHER" id="PTHR21454">
    <property type="entry name" value="DPH3 HOMOLOG-RELATED"/>
    <property type="match status" value="1"/>
</dbReference>
<dbReference type="Pfam" id="PF05207">
    <property type="entry name" value="Zn_ribbon_CSL"/>
    <property type="match status" value="1"/>
</dbReference>
<dbReference type="SUPFAM" id="SSF144217">
    <property type="entry name" value="CSL zinc finger"/>
    <property type="match status" value="1"/>
</dbReference>
<dbReference type="PROSITE" id="PS51074">
    <property type="entry name" value="DPH_MB"/>
    <property type="match status" value="1"/>
</dbReference>
<proteinExistence type="inferred from homology"/>
<protein>
    <recommendedName>
        <fullName>Diphthamide biosynthesis protein 3</fullName>
    </recommendedName>
</protein>
<keyword id="KW-0963">Cytoplasm</keyword>
<keyword id="KW-0408">Iron</keyword>
<keyword id="KW-0479">Metal-binding</keyword>
<keyword id="KW-0539">Nucleus</keyword>
<keyword id="KW-0560">Oxidoreductase</keyword>
<keyword id="KW-1185">Reference proteome</keyword>
<feature type="chain" id="PRO_0000082635" description="Diphthamide biosynthesis protein 3">
    <location>
        <begin position="1"/>
        <end position="82"/>
    </location>
</feature>
<feature type="domain" description="DPH-type MB" evidence="3">
    <location>
        <begin position="8"/>
        <end position="64"/>
    </location>
</feature>
<feature type="binding site" evidence="2">
    <location>
        <position position="30"/>
    </location>
    <ligand>
        <name>Fe cation</name>
        <dbReference type="ChEBI" id="CHEBI:24875"/>
    </ligand>
</feature>
<feature type="binding site" evidence="2">
    <location>
        <position position="32"/>
    </location>
    <ligand>
        <name>Fe cation</name>
        <dbReference type="ChEBI" id="CHEBI:24875"/>
    </ligand>
</feature>
<feature type="binding site" evidence="2">
    <location>
        <position position="52"/>
    </location>
    <ligand>
        <name>Fe cation</name>
        <dbReference type="ChEBI" id="CHEBI:24875"/>
    </ligand>
</feature>
<feature type="binding site" evidence="2">
    <location>
        <position position="55"/>
    </location>
    <ligand>
        <name>Fe cation</name>
        <dbReference type="ChEBI" id="CHEBI:24875"/>
    </ligand>
</feature>
<sequence length="82" mass="8959">MSDEEYSIYDEVEIEDMTYDPALQTYSYPCPCGDKFEIALADLQDGQDIAVCPSCSLMVRVIFEVDNLPKAPDAAASIAVSA</sequence>
<evidence type="ECO:0000250" key="1"/>
<evidence type="ECO:0000250" key="2">
    <source>
        <dbReference type="UniProtKB" id="Q3E840"/>
    </source>
</evidence>
<evidence type="ECO:0000255" key="3">
    <source>
        <dbReference type="PROSITE-ProRule" id="PRU00456"/>
    </source>
</evidence>
<evidence type="ECO:0000305" key="4"/>
<comment type="function">
    <text evidence="2">Required for the first step of diphthamide biosynthesis, a post-translational modification of histidine which occurs in elongation factor 2. Dph-1 and dph-2 transfer a 3-amino-3-carboxypropyl (ACP) group from S-adenosyl-L-methionine (SAM) to a histidine residue, the reaction is assisted by a reduction system comprising dph-3 and a NADH-dependent reductase, predominantly cbr-1. Acts as an electron donor to reduce the Fe-S cluster in dph1-dph2 keeping the [4Fe-4S] clusters in the active and reduced state. Restores iron to dph-1-dph-2 iron-sulfur clusters which have degraded from [4Fe-4S] to [3Fe-4S] by donating an iron atom to reform [4Fe-4S] clusters, in a manner dependent on the presence of elongation factor 2 and SAM. Associates with the elongator complex and is required for tRNA Wobble base modifications mediated by the elongator complex. The elongator complex is required for multiple tRNA modifications, including mcm5U (5-methoxycarbonylmethyl uridine), mcm5s 2U (5-methoxycarbonylmethyl-2-thiouridine), and ncm5U (5-carbamoylmethyl uridine).</text>
</comment>
<comment type="catalytic activity">
    <reaction evidence="2">
        <text>[3Fe-4S](1+)-[protein] + Fe(2+)-[Dph3] = [3Fe-4S](0)-[protein] + Fe(3+)-[Dph3]</text>
        <dbReference type="Rhea" id="RHEA:71235"/>
        <dbReference type="Rhea" id="RHEA-COMP:17996"/>
        <dbReference type="Rhea" id="RHEA-COMP:17997"/>
        <dbReference type="Rhea" id="RHEA-COMP:18002"/>
        <dbReference type="Rhea" id="RHEA-COMP:18003"/>
        <dbReference type="ChEBI" id="CHEBI:29033"/>
        <dbReference type="ChEBI" id="CHEBI:29034"/>
        <dbReference type="ChEBI" id="CHEBI:33751"/>
        <dbReference type="ChEBI" id="CHEBI:47402"/>
        <dbReference type="ChEBI" id="CHEBI:83228"/>
    </reaction>
</comment>
<comment type="catalytic activity">
    <reaction evidence="2">
        <text>2 [3Fe-4S](0)-[protein] + 2 Fe(2+)-[Dph3] + NADH = 2 [4Fe-4S](1+)-[protein] + 2 [Dph3] + NAD(+) + H(+)</text>
        <dbReference type="Rhea" id="RHEA:71239"/>
        <dbReference type="Rhea" id="RHEA-COMP:17997"/>
        <dbReference type="Rhea" id="RHEA-COMP:17998"/>
        <dbReference type="Rhea" id="RHEA-COMP:18001"/>
        <dbReference type="Rhea" id="RHEA-COMP:18002"/>
        <dbReference type="ChEBI" id="CHEBI:15378"/>
        <dbReference type="ChEBI" id="CHEBI:29033"/>
        <dbReference type="ChEBI" id="CHEBI:33723"/>
        <dbReference type="ChEBI" id="CHEBI:47402"/>
        <dbReference type="ChEBI" id="CHEBI:57540"/>
        <dbReference type="ChEBI" id="CHEBI:57945"/>
        <dbReference type="ChEBI" id="CHEBI:83228"/>
    </reaction>
</comment>
<comment type="cofactor">
    <cofactor evidence="2">
        <name>Fe(2+)</name>
        <dbReference type="ChEBI" id="CHEBI:29033"/>
    </cofactor>
</comment>
<comment type="pathway">
    <text evidence="2">Protein modification; peptidyl-diphthamide biosynthesis.</text>
</comment>
<comment type="subunit">
    <text evidence="2">Component of the 2-(3-amino-3-carboxypropyl)histidine synthase complex composed of dph-1, dph-2, dph-3 and a NADH-dependent reductase, predominantly cbr-1.</text>
</comment>
<comment type="subcellular location">
    <subcellularLocation>
        <location evidence="1">Cytoplasm</location>
    </subcellularLocation>
    <subcellularLocation>
        <location evidence="1">Nucleus</location>
    </subcellularLocation>
</comment>
<comment type="domain">
    <text evidence="2">The DPH-type metal-binding (MB) domain can also bind zinc. However, iron is the physiological binding partner as zinc binding impairs the protein electron donor function.</text>
</comment>
<comment type="similarity">
    <text evidence="4">Belongs to the DPH3 family.</text>
</comment>
<name>DPH3_NEUCR</name>
<gene>
    <name type="primary">dph-3</name>
    <name type="ORF">B10K17.050</name>
    <name type="ORF">NCU09465</name>
</gene>
<organism>
    <name type="scientific">Neurospora crassa (strain ATCC 24698 / 74-OR23-1A / CBS 708.71 / DSM 1257 / FGSC 987)</name>
    <dbReference type="NCBI Taxonomy" id="367110"/>
    <lineage>
        <taxon>Eukaryota</taxon>
        <taxon>Fungi</taxon>
        <taxon>Dikarya</taxon>
        <taxon>Ascomycota</taxon>
        <taxon>Pezizomycotina</taxon>
        <taxon>Sordariomycetes</taxon>
        <taxon>Sordariomycetidae</taxon>
        <taxon>Sordariales</taxon>
        <taxon>Sordariaceae</taxon>
        <taxon>Neurospora</taxon>
    </lineage>
</organism>
<accession>Q7SC15</accession>